<keyword id="KW-0249">Electron transport</keyword>
<keyword id="KW-0472">Membrane</keyword>
<keyword id="KW-0496">Mitochondrion</keyword>
<keyword id="KW-0520">NAD</keyword>
<keyword id="KW-0679">Respiratory chain</keyword>
<keyword id="KW-1278">Translocase</keyword>
<keyword id="KW-0812">Transmembrane</keyword>
<keyword id="KW-1133">Transmembrane helix</keyword>
<keyword id="KW-0813">Transport</keyword>
<keyword id="KW-0830">Ubiquinone</keyword>
<protein>
    <recommendedName>
        <fullName>NADH-ubiquinone oxidoreductase chain 3</fullName>
        <ecNumber>7.1.1.2</ecNumber>
    </recommendedName>
    <alternativeName>
        <fullName>NADH dehydrogenase subunit 3</fullName>
    </alternativeName>
</protein>
<feature type="chain" id="PRO_0000117800" description="NADH-ubiquinone oxidoreductase chain 3">
    <location>
        <begin position="1"/>
        <end position="116"/>
    </location>
</feature>
<feature type="transmembrane region" description="Helical" evidence="2">
    <location>
        <begin position="4"/>
        <end position="24"/>
    </location>
</feature>
<feature type="transmembrane region" description="Helical" evidence="2">
    <location>
        <begin position="56"/>
        <end position="76"/>
    </location>
</feature>
<feature type="transmembrane region" description="Helical" evidence="2">
    <location>
        <begin position="87"/>
        <end position="107"/>
    </location>
</feature>
<dbReference type="EC" id="7.1.1.2"/>
<dbReference type="EMBL" id="U11880">
    <property type="protein sequence ID" value="AAB08745.1"/>
    <property type="molecule type" value="Genomic_DNA"/>
</dbReference>
<dbReference type="PIR" id="S55011">
    <property type="entry name" value="S55011"/>
</dbReference>
<dbReference type="RefSeq" id="NP_008155.1">
    <property type="nucleotide sequence ID" value="NC_001626.1"/>
</dbReference>
<dbReference type="SMR" id="Q35540"/>
<dbReference type="STRING" id="7757.ENSPMAP00000011438"/>
<dbReference type="Ensembl" id="ENSPMAT00000014131.1">
    <property type="protein sequence ID" value="ENSPMAP00000011438.1"/>
    <property type="gene ID" value="ENSPMAG00000013104.1"/>
</dbReference>
<dbReference type="GeneID" id="807807"/>
<dbReference type="KEGG" id="pmrn:807807"/>
<dbReference type="CTD" id="4537"/>
<dbReference type="GeneTree" id="ENSGT00390000011605"/>
<dbReference type="HOGENOM" id="CLU_119549_3_1_1"/>
<dbReference type="OMA" id="GPRRYNR"/>
<dbReference type="OrthoDB" id="154075at2759"/>
<dbReference type="Proteomes" id="UP001318040">
    <property type="component" value="Mitochondrion MT"/>
</dbReference>
<dbReference type="GO" id="GO:0031966">
    <property type="term" value="C:mitochondrial membrane"/>
    <property type="evidence" value="ECO:0007669"/>
    <property type="project" value="UniProtKB-SubCell"/>
</dbReference>
<dbReference type="GO" id="GO:0030964">
    <property type="term" value="C:NADH dehydrogenase complex"/>
    <property type="evidence" value="ECO:0007669"/>
    <property type="project" value="TreeGrafter"/>
</dbReference>
<dbReference type="GO" id="GO:0008137">
    <property type="term" value="F:NADH dehydrogenase (ubiquinone) activity"/>
    <property type="evidence" value="ECO:0007669"/>
    <property type="project" value="UniProtKB-EC"/>
</dbReference>
<dbReference type="FunFam" id="1.20.58.1610:FF:000004">
    <property type="entry name" value="NADH-quinone oxidoreductase subunit A"/>
    <property type="match status" value="1"/>
</dbReference>
<dbReference type="Gene3D" id="1.20.58.1610">
    <property type="entry name" value="NADH:ubiquinone/plastoquinone oxidoreductase, chain 3"/>
    <property type="match status" value="1"/>
</dbReference>
<dbReference type="InterPro" id="IPR000440">
    <property type="entry name" value="NADH_UbQ/plastoQ_OxRdtase_su3"/>
</dbReference>
<dbReference type="InterPro" id="IPR038430">
    <property type="entry name" value="NDAH_ubi_oxred_su3_sf"/>
</dbReference>
<dbReference type="PANTHER" id="PTHR11058">
    <property type="entry name" value="NADH-UBIQUINONE OXIDOREDUCTASE CHAIN 3"/>
    <property type="match status" value="1"/>
</dbReference>
<dbReference type="PANTHER" id="PTHR11058:SF9">
    <property type="entry name" value="NADH-UBIQUINONE OXIDOREDUCTASE CHAIN 3"/>
    <property type="match status" value="1"/>
</dbReference>
<dbReference type="Pfam" id="PF00507">
    <property type="entry name" value="Oxidored_q4"/>
    <property type="match status" value="1"/>
</dbReference>
<comment type="function">
    <text evidence="1">Core subunit of the mitochondrial membrane respiratory chain NADH dehydrogenase (Complex I) that is believed to belong to the minimal assembly required for catalysis. Complex I functions in the transfer of electrons from NADH to the respiratory chain. The immediate electron acceptor for the enzyme is believed to be ubiquinone (By similarity).</text>
</comment>
<comment type="catalytic activity">
    <reaction>
        <text>a ubiquinone + NADH + 5 H(+)(in) = a ubiquinol + NAD(+) + 4 H(+)(out)</text>
        <dbReference type="Rhea" id="RHEA:29091"/>
        <dbReference type="Rhea" id="RHEA-COMP:9565"/>
        <dbReference type="Rhea" id="RHEA-COMP:9566"/>
        <dbReference type="ChEBI" id="CHEBI:15378"/>
        <dbReference type="ChEBI" id="CHEBI:16389"/>
        <dbReference type="ChEBI" id="CHEBI:17976"/>
        <dbReference type="ChEBI" id="CHEBI:57540"/>
        <dbReference type="ChEBI" id="CHEBI:57945"/>
        <dbReference type="EC" id="7.1.1.2"/>
    </reaction>
</comment>
<comment type="subcellular location">
    <subcellularLocation>
        <location evidence="1">Mitochondrion membrane</location>
        <topology evidence="1">Multi-pass membrane protein</topology>
    </subcellularLocation>
</comment>
<comment type="similarity">
    <text evidence="3">Belongs to the complex I subunit 3 family.</text>
</comment>
<evidence type="ECO:0000250" key="1"/>
<evidence type="ECO:0000255" key="2"/>
<evidence type="ECO:0000305" key="3"/>
<gene>
    <name type="primary">MT-ND3</name>
    <name type="synonym">MTND3</name>
    <name type="synonym">NADH3</name>
    <name type="synonym">ND3</name>
</gene>
<reference key="1">
    <citation type="journal article" date="1995" name="Genetics">
        <title>Complete sequence of a sea lamprey (Petromyzon marinus) mitochondrial genome: early establishment of the vertebrate genome organization.</title>
        <authorList>
            <person name="Lee W.J."/>
            <person name="Kocher T.D."/>
        </authorList>
    </citation>
    <scope>NUCLEOTIDE SEQUENCE [GENOMIC DNA]</scope>
</reference>
<geneLocation type="mitochondrion"/>
<sequence length="116" mass="13192">MNSFMVMIMLTLTLSSIMALLAFWLPIMKPDSEKLSPYECGFDPQGSARLPFSLRFFLVAILFLLFDLEIALLLPSPWATNISNPEFTLLWASLFVLLLTLGLIYEWLQGGLDWAE</sequence>
<proteinExistence type="inferred from homology"/>
<organism>
    <name type="scientific">Petromyzon marinus</name>
    <name type="common">Sea lamprey</name>
    <dbReference type="NCBI Taxonomy" id="7757"/>
    <lineage>
        <taxon>Eukaryota</taxon>
        <taxon>Metazoa</taxon>
        <taxon>Chordata</taxon>
        <taxon>Craniata</taxon>
        <taxon>Vertebrata</taxon>
        <taxon>Cyclostomata</taxon>
        <taxon>Hyperoartia</taxon>
        <taxon>Petromyzontiformes</taxon>
        <taxon>Petromyzontidae</taxon>
        <taxon>Petromyzon</taxon>
    </lineage>
</organism>
<accession>Q35540</accession>
<name>NU3M_PETMA</name>